<sequence>MKRKIIVACGGAVATSTMAAEEIKELCQSHNIPVELIQCRVNEIETYMDGVHLICTTARVDRSFGDIPLVHGMPFVSGVGIEALQNKILTILQG</sequence>
<reference key="1">
    <citation type="journal article" date="2001" name="Nature">
        <title>Genome sequence of enterohaemorrhagic Escherichia coli O157:H7.</title>
        <authorList>
            <person name="Perna N.T."/>
            <person name="Plunkett G. III"/>
            <person name="Burland V."/>
            <person name="Mau B."/>
            <person name="Glasner J.D."/>
            <person name="Rose D.J."/>
            <person name="Mayhew G.F."/>
            <person name="Evans P.S."/>
            <person name="Gregor J."/>
            <person name="Kirkpatrick H.A."/>
            <person name="Posfai G."/>
            <person name="Hackett J."/>
            <person name="Klink S."/>
            <person name="Boutin A."/>
            <person name="Shao Y."/>
            <person name="Miller L."/>
            <person name="Grotbeck E.J."/>
            <person name="Davis N.W."/>
            <person name="Lim A."/>
            <person name="Dimalanta E.T."/>
            <person name="Potamousis K."/>
            <person name="Apodaca J."/>
            <person name="Anantharaman T.S."/>
            <person name="Lin J."/>
            <person name="Yen G."/>
            <person name="Schwartz D.C."/>
            <person name="Welch R.A."/>
            <person name="Blattner F.R."/>
        </authorList>
    </citation>
    <scope>NUCLEOTIDE SEQUENCE [LARGE SCALE GENOMIC DNA]</scope>
    <source>
        <strain>O157:H7 / EDL933 / ATCC 700927 / EHEC</strain>
    </source>
</reference>
<reference key="2">
    <citation type="journal article" date="2001" name="DNA Res.">
        <title>Complete genome sequence of enterohemorrhagic Escherichia coli O157:H7 and genomic comparison with a laboratory strain K-12.</title>
        <authorList>
            <person name="Hayashi T."/>
            <person name="Makino K."/>
            <person name="Ohnishi M."/>
            <person name="Kurokawa K."/>
            <person name="Ishii K."/>
            <person name="Yokoyama K."/>
            <person name="Han C.-G."/>
            <person name="Ohtsubo E."/>
            <person name="Nakayama K."/>
            <person name="Murata T."/>
            <person name="Tanaka M."/>
            <person name="Tobe T."/>
            <person name="Iida T."/>
            <person name="Takami H."/>
            <person name="Honda T."/>
            <person name="Sasakawa C."/>
            <person name="Ogasawara N."/>
            <person name="Yasunaga T."/>
            <person name="Kuhara S."/>
            <person name="Shiba T."/>
            <person name="Hattori M."/>
            <person name="Shinagawa H."/>
        </authorList>
    </citation>
    <scope>NUCLEOTIDE SEQUENCE [LARGE SCALE GENOMIC DNA]</scope>
    <source>
        <strain>O157:H7 / Sakai / RIMD 0509952 / EHEC</strain>
    </source>
</reference>
<keyword id="KW-0963">Cytoplasm</keyword>
<keyword id="KW-0298">Galactitol metabolism</keyword>
<keyword id="KW-0597">Phosphoprotein</keyword>
<keyword id="KW-0598">Phosphotransferase system</keyword>
<keyword id="KW-1185">Reference proteome</keyword>
<keyword id="KW-0762">Sugar transport</keyword>
<keyword id="KW-0808">Transferase</keyword>
<keyword id="KW-0813">Transport</keyword>
<proteinExistence type="inferred from homology"/>
<dbReference type="EC" id="2.7.1.200" evidence="1"/>
<dbReference type="EMBL" id="AE005174">
    <property type="protein sequence ID" value="AAG57150.1"/>
    <property type="molecule type" value="Genomic_DNA"/>
</dbReference>
<dbReference type="EMBL" id="BA000007">
    <property type="protein sequence ID" value="BAB36319.1"/>
    <property type="molecule type" value="Genomic_DNA"/>
</dbReference>
<dbReference type="PIR" id="B85836">
    <property type="entry name" value="B85836"/>
</dbReference>
<dbReference type="PIR" id="H90990">
    <property type="entry name" value="H90990"/>
</dbReference>
<dbReference type="RefSeq" id="NP_310923.1">
    <property type="nucleotide sequence ID" value="NC_002695.1"/>
</dbReference>
<dbReference type="RefSeq" id="WP_000823288.1">
    <property type="nucleotide sequence ID" value="NZ_VOAI01000013.1"/>
</dbReference>
<dbReference type="BMRB" id="P0A436"/>
<dbReference type="SMR" id="P0A436"/>
<dbReference type="STRING" id="155864.Z3256"/>
<dbReference type="GeneID" id="916598"/>
<dbReference type="KEGG" id="ece:Z3256"/>
<dbReference type="KEGG" id="ecs:ECs_2896"/>
<dbReference type="PATRIC" id="fig|386585.9.peg.3028"/>
<dbReference type="eggNOG" id="COG3414">
    <property type="taxonomic scope" value="Bacteria"/>
</dbReference>
<dbReference type="HOGENOM" id="CLU_159248_3_3_6"/>
<dbReference type="OMA" id="AHLICTT"/>
<dbReference type="Proteomes" id="UP000000558">
    <property type="component" value="Chromosome"/>
</dbReference>
<dbReference type="Proteomes" id="UP000002519">
    <property type="component" value="Chromosome"/>
</dbReference>
<dbReference type="GO" id="GO:0005737">
    <property type="term" value="C:cytoplasm"/>
    <property type="evidence" value="ECO:0007669"/>
    <property type="project" value="UniProtKB-SubCell"/>
</dbReference>
<dbReference type="GO" id="GO:0008982">
    <property type="term" value="F:protein-N(PI)-phosphohistidine-sugar phosphotransferase activity"/>
    <property type="evidence" value="ECO:0007669"/>
    <property type="project" value="InterPro"/>
</dbReference>
<dbReference type="GO" id="GO:0019402">
    <property type="term" value="P:galactitol metabolic process"/>
    <property type="evidence" value="ECO:0007669"/>
    <property type="project" value="UniProtKB-KW"/>
</dbReference>
<dbReference type="GO" id="GO:0009401">
    <property type="term" value="P:phosphoenolpyruvate-dependent sugar phosphotransferase system"/>
    <property type="evidence" value="ECO:0007669"/>
    <property type="project" value="UniProtKB-KW"/>
</dbReference>
<dbReference type="CDD" id="cd05566">
    <property type="entry name" value="PTS_IIB_galactitol"/>
    <property type="match status" value="1"/>
</dbReference>
<dbReference type="FunFam" id="3.40.50.2300:FF:000166">
    <property type="entry name" value="Galactitol-specific phosphotransferase enzyme IIB component"/>
    <property type="match status" value="1"/>
</dbReference>
<dbReference type="Gene3D" id="3.40.50.2300">
    <property type="match status" value="1"/>
</dbReference>
<dbReference type="InterPro" id="IPR036095">
    <property type="entry name" value="PTS_EIIB-like_sf"/>
</dbReference>
<dbReference type="InterPro" id="IPR013011">
    <property type="entry name" value="PTS_EIIB_2"/>
</dbReference>
<dbReference type="InterPro" id="IPR003501">
    <property type="entry name" value="PTS_EIIB_2/3"/>
</dbReference>
<dbReference type="NCBIfam" id="NF007643">
    <property type="entry name" value="PRK10310.1"/>
    <property type="match status" value="1"/>
</dbReference>
<dbReference type="Pfam" id="PF02302">
    <property type="entry name" value="PTS_IIB"/>
    <property type="match status" value="1"/>
</dbReference>
<dbReference type="SUPFAM" id="SSF52794">
    <property type="entry name" value="PTS system IIB component-like"/>
    <property type="match status" value="1"/>
</dbReference>
<dbReference type="PROSITE" id="PS51099">
    <property type="entry name" value="PTS_EIIB_TYPE_2"/>
    <property type="match status" value="1"/>
</dbReference>
<protein>
    <recommendedName>
        <fullName evidence="1">PTS system galactitol-specific EIIB component</fullName>
    </recommendedName>
    <alternativeName>
        <fullName evidence="1">EIIB-Gat</fullName>
    </alternativeName>
    <alternativeName>
        <fullName evidence="1">Galactitol-specific phosphotransferase enzyme IIB component</fullName>
        <ecNumber evidence="1">2.7.1.200</ecNumber>
    </alternativeName>
</protein>
<feature type="chain" id="PRO_0000186574" description="PTS system galactitol-specific EIIB component">
    <location>
        <begin position="1"/>
        <end position="94"/>
    </location>
</feature>
<feature type="domain" description="PTS EIIB type-2" evidence="2">
    <location>
        <begin position="1"/>
        <end position="94"/>
    </location>
</feature>
<feature type="active site" description="Phosphocysteine intermediate; for EIIB activity" evidence="3">
    <location>
        <position position="9"/>
    </location>
</feature>
<feature type="modified residue" description="Phosphocysteine; by EIIA" evidence="3">
    <location>
        <position position="9"/>
    </location>
</feature>
<evidence type="ECO:0000250" key="1">
    <source>
        <dbReference type="UniProtKB" id="P37188"/>
    </source>
</evidence>
<evidence type="ECO:0000255" key="2">
    <source>
        <dbReference type="PROSITE-ProRule" id="PRU00422"/>
    </source>
</evidence>
<evidence type="ECO:0000305" key="3"/>
<name>PTKB_ECO57</name>
<comment type="function">
    <text evidence="1">The phosphoenolpyruvate-dependent sugar phosphotransferase system (PTS), a major carbohydrate active transport system, catalyzes the phosphorylation of incoming sugar substrates concomitant with their translocation across the cell membrane. The enzyme II complex composed of GatA, GatB and GatC is involved in galactitol transport.</text>
</comment>
<comment type="catalytic activity">
    <reaction evidence="1">
        <text>galactitol(out) + N(pros)-phospho-L-histidyl-[protein] = galactitol 1-phosphate(in) + L-histidyl-[protein]</text>
        <dbReference type="Rhea" id="RHEA:49248"/>
        <dbReference type="Rhea" id="RHEA-COMP:9745"/>
        <dbReference type="Rhea" id="RHEA-COMP:9746"/>
        <dbReference type="ChEBI" id="CHEBI:16813"/>
        <dbReference type="ChEBI" id="CHEBI:29979"/>
        <dbReference type="ChEBI" id="CHEBI:60083"/>
        <dbReference type="ChEBI" id="CHEBI:64837"/>
        <dbReference type="EC" id="2.7.1.200"/>
    </reaction>
</comment>
<comment type="subunit">
    <text evidence="1">Forms a complex with one each of subunit of GatA, GatB and 2 subunits of GatC.</text>
</comment>
<comment type="subcellular location">
    <subcellularLocation>
        <location evidence="3">Cytoplasm</location>
    </subcellularLocation>
</comment>
<comment type="induction">
    <text evidence="1">Constitutively expressed.</text>
</comment>
<comment type="domain">
    <text evidence="2">The EIIB domain is phosphorylated by phospho-EIIA on a cysteinyl or histidyl residue, depending on the transported sugar. Then, it transfers the phosphoryl group to the sugar substrate concomitantly with the sugar uptake processed by the EIIC domain.</text>
</comment>
<gene>
    <name type="primary">gatB</name>
    <name type="ordered locus">Z3256</name>
    <name type="ordered locus">ECs2896</name>
</gene>
<accession>P0A436</accession>
<accession>Q8X7H5</accession>
<organism>
    <name type="scientific">Escherichia coli O157:H7</name>
    <dbReference type="NCBI Taxonomy" id="83334"/>
    <lineage>
        <taxon>Bacteria</taxon>
        <taxon>Pseudomonadati</taxon>
        <taxon>Pseudomonadota</taxon>
        <taxon>Gammaproteobacteria</taxon>
        <taxon>Enterobacterales</taxon>
        <taxon>Enterobacteriaceae</taxon>
        <taxon>Escherichia</taxon>
    </lineage>
</organism>